<feature type="chain" id="PRO_0000229657" description="NAD kinase">
    <location>
        <begin position="1"/>
        <end position="296"/>
    </location>
</feature>
<feature type="active site" description="Proton acceptor" evidence="1">
    <location>
        <position position="78"/>
    </location>
</feature>
<feature type="binding site" evidence="1">
    <location>
        <begin position="78"/>
        <end position="79"/>
    </location>
    <ligand>
        <name>NAD(+)</name>
        <dbReference type="ChEBI" id="CHEBI:57540"/>
    </ligand>
</feature>
<feature type="binding site" evidence="1">
    <location>
        <begin position="152"/>
        <end position="153"/>
    </location>
    <ligand>
        <name>NAD(+)</name>
        <dbReference type="ChEBI" id="CHEBI:57540"/>
    </ligand>
</feature>
<feature type="binding site" evidence="1">
    <location>
        <position position="180"/>
    </location>
    <ligand>
        <name>NAD(+)</name>
        <dbReference type="ChEBI" id="CHEBI:57540"/>
    </ligand>
</feature>
<feature type="binding site" evidence="1">
    <location>
        <position position="182"/>
    </location>
    <ligand>
        <name>NAD(+)</name>
        <dbReference type="ChEBI" id="CHEBI:57540"/>
    </ligand>
</feature>
<feature type="binding site" evidence="1">
    <location>
        <position position="251"/>
    </location>
    <ligand>
        <name>NAD(+)</name>
        <dbReference type="ChEBI" id="CHEBI:57540"/>
    </ligand>
</feature>
<reference key="1">
    <citation type="submission" date="2003-03" db="EMBL/GenBank/DDBJ databases">
        <title>The complete genome sequence of Neisseria gonorrhoeae.</title>
        <authorList>
            <person name="Lewis L.A."/>
            <person name="Gillaspy A.F."/>
            <person name="McLaughlin R.E."/>
            <person name="Gipson M."/>
            <person name="Ducey T.F."/>
            <person name="Ownbey T."/>
            <person name="Hartman K."/>
            <person name="Nydick C."/>
            <person name="Carson M.B."/>
            <person name="Vaughn J."/>
            <person name="Thomson C."/>
            <person name="Song L."/>
            <person name="Lin S."/>
            <person name="Yuan X."/>
            <person name="Najar F."/>
            <person name="Zhan M."/>
            <person name="Ren Q."/>
            <person name="Zhu H."/>
            <person name="Qi S."/>
            <person name="Kenton S.M."/>
            <person name="Lai H."/>
            <person name="White J.D."/>
            <person name="Clifton S."/>
            <person name="Roe B.A."/>
            <person name="Dyer D.W."/>
        </authorList>
    </citation>
    <scope>NUCLEOTIDE SEQUENCE [LARGE SCALE GENOMIC DNA]</scope>
    <source>
        <strain>ATCC 700825 / FA 1090</strain>
    </source>
</reference>
<protein>
    <recommendedName>
        <fullName evidence="1">NAD kinase</fullName>
        <ecNumber evidence="1">2.7.1.23</ecNumber>
    </recommendedName>
    <alternativeName>
        <fullName evidence="1">ATP-dependent NAD kinase</fullName>
    </alternativeName>
</protein>
<keyword id="KW-0067">ATP-binding</keyword>
<keyword id="KW-0963">Cytoplasm</keyword>
<keyword id="KW-0418">Kinase</keyword>
<keyword id="KW-0520">NAD</keyword>
<keyword id="KW-0521">NADP</keyword>
<keyword id="KW-0547">Nucleotide-binding</keyword>
<keyword id="KW-1185">Reference proteome</keyword>
<keyword id="KW-0808">Transferase</keyword>
<comment type="function">
    <text evidence="1">Involved in the regulation of the intracellular balance of NAD and NADP, and is a key enzyme in the biosynthesis of NADP. Catalyzes specifically the phosphorylation on 2'-hydroxyl of the adenosine moiety of NAD to yield NADP.</text>
</comment>
<comment type="catalytic activity">
    <reaction evidence="1">
        <text>NAD(+) + ATP = ADP + NADP(+) + H(+)</text>
        <dbReference type="Rhea" id="RHEA:18629"/>
        <dbReference type="ChEBI" id="CHEBI:15378"/>
        <dbReference type="ChEBI" id="CHEBI:30616"/>
        <dbReference type="ChEBI" id="CHEBI:57540"/>
        <dbReference type="ChEBI" id="CHEBI:58349"/>
        <dbReference type="ChEBI" id="CHEBI:456216"/>
        <dbReference type="EC" id="2.7.1.23"/>
    </reaction>
</comment>
<comment type="cofactor">
    <cofactor evidence="1">
        <name>a divalent metal cation</name>
        <dbReference type="ChEBI" id="CHEBI:60240"/>
    </cofactor>
</comment>
<comment type="subcellular location">
    <subcellularLocation>
        <location evidence="1">Cytoplasm</location>
    </subcellularLocation>
</comment>
<comment type="similarity">
    <text evidence="1">Belongs to the NAD kinase family.</text>
</comment>
<accession>Q5F9K3</accession>
<name>NADK_NEIG1</name>
<evidence type="ECO:0000255" key="1">
    <source>
        <dbReference type="HAMAP-Rule" id="MF_00361"/>
    </source>
</evidence>
<dbReference type="EC" id="2.7.1.23" evidence="1"/>
<dbReference type="EMBL" id="AE004969">
    <property type="protein sequence ID" value="AAW89134.1"/>
    <property type="molecule type" value="Genomic_DNA"/>
</dbReference>
<dbReference type="RefSeq" id="WP_003687818.1">
    <property type="nucleotide sequence ID" value="NC_002946.2"/>
</dbReference>
<dbReference type="RefSeq" id="YP_207546.1">
    <property type="nucleotide sequence ID" value="NC_002946.2"/>
</dbReference>
<dbReference type="SMR" id="Q5F9K3"/>
<dbReference type="STRING" id="242231.NGO_0390"/>
<dbReference type="KEGG" id="ngo:NGO_0390"/>
<dbReference type="PATRIC" id="fig|242231.10.peg.471"/>
<dbReference type="HOGENOM" id="CLU_008831_0_1_4"/>
<dbReference type="Proteomes" id="UP000000535">
    <property type="component" value="Chromosome"/>
</dbReference>
<dbReference type="GO" id="GO:0005737">
    <property type="term" value="C:cytoplasm"/>
    <property type="evidence" value="ECO:0007669"/>
    <property type="project" value="UniProtKB-SubCell"/>
</dbReference>
<dbReference type="GO" id="GO:0005524">
    <property type="term" value="F:ATP binding"/>
    <property type="evidence" value="ECO:0007669"/>
    <property type="project" value="UniProtKB-KW"/>
</dbReference>
<dbReference type="GO" id="GO:0046872">
    <property type="term" value="F:metal ion binding"/>
    <property type="evidence" value="ECO:0007669"/>
    <property type="project" value="UniProtKB-UniRule"/>
</dbReference>
<dbReference type="GO" id="GO:0051287">
    <property type="term" value="F:NAD binding"/>
    <property type="evidence" value="ECO:0007669"/>
    <property type="project" value="UniProtKB-ARBA"/>
</dbReference>
<dbReference type="GO" id="GO:0003951">
    <property type="term" value="F:NAD+ kinase activity"/>
    <property type="evidence" value="ECO:0007669"/>
    <property type="project" value="UniProtKB-UniRule"/>
</dbReference>
<dbReference type="GO" id="GO:0019674">
    <property type="term" value="P:NAD metabolic process"/>
    <property type="evidence" value="ECO:0007669"/>
    <property type="project" value="InterPro"/>
</dbReference>
<dbReference type="GO" id="GO:0006741">
    <property type="term" value="P:NADP biosynthetic process"/>
    <property type="evidence" value="ECO:0007669"/>
    <property type="project" value="UniProtKB-UniRule"/>
</dbReference>
<dbReference type="FunFam" id="2.60.200.30:FF:000011">
    <property type="entry name" value="NAD kinase"/>
    <property type="match status" value="1"/>
</dbReference>
<dbReference type="Gene3D" id="3.40.50.10330">
    <property type="entry name" value="Probable inorganic polyphosphate/atp-NAD kinase, domain 1"/>
    <property type="match status" value="1"/>
</dbReference>
<dbReference type="Gene3D" id="2.60.200.30">
    <property type="entry name" value="Probable inorganic polyphosphate/atp-NAD kinase, domain 2"/>
    <property type="match status" value="1"/>
</dbReference>
<dbReference type="HAMAP" id="MF_00361">
    <property type="entry name" value="NAD_kinase"/>
    <property type="match status" value="1"/>
</dbReference>
<dbReference type="InterPro" id="IPR017438">
    <property type="entry name" value="ATP-NAD_kinase_N"/>
</dbReference>
<dbReference type="InterPro" id="IPR017437">
    <property type="entry name" value="ATP-NAD_kinase_PpnK-typ_C"/>
</dbReference>
<dbReference type="InterPro" id="IPR016064">
    <property type="entry name" value="NAD/diacylglycerol_kinase_sf"/>
</dbReference>
<dbReference type="InterPro" id="IPR002504">
    <property type="entry name" value="NADK"/>
</dbReference>
<dbReference type="NCBIfam" id="NF002306">
    <property type="entry name" value="PRK01231.1"/>
    <property type="match status" value="1"/>
</dbReference>
<dbReference type="NCBIfam" id="NF003391">
    <property type="entry name" value="PRK04539.1"/>
    <property type="match status" value="1"/>
</dbReference>
<dbReference type="PANTHER" id="PTHR20275">
    <property type="entry name" value="NAD KINASE"/>
    <property type="match status" value="1"/>
</dbReference>
<dbReference type="PANTHER" id="PTHR20275:SF0">
    <property type="entry name" value="NAD KINASE"/>
    <property type="match status" value="1"/>
</dbReference>
<dbReference type="Pfam" id="PF01513">
    <property type="entry name" value="NAD_kinase"/>
    <property type="match status" value="1"/>
</dbReference>
<dbReference type="Pfam" id="PF20143">
    <property type="entry name" value="NAD_kinase_C"/>
    <property type="match status" value="1"/>
</dbReference>
<dbReference type="SUPFAM" id="SSF111331">
    <property type="entry name" value="NAD kinase/diacylglycerol kinase-like"/>
    <property type="match status" value="1"/>
</dbReference>
<proteinExistence type="inferred from homology"/>
<gene>
    <name evidence="1" type="primary">nadK</name>
    <name type="ordered locus">NGO_0390</name>
</gene>
<organism>
    <name type="scientific">Neisseria gonorrhoeae (strain ATCC 700825 / FA 1090)</name>
    <dbReference type="NCBI Taxonomy" id="242231"/>
    <lineage>
        <taxon>Bacteria</taxon>
        <taxon>Pseudomonadati</taxon>
        <taxon>Pseudomonadota</taxon>
        <taxon>Betaproteobacteria</taxon>
        <taxon>Neisseriales</taxon>
        <taxon>Neisseriaceae</taxon>
        <taxon>Neisseria</taxon>
    </lineage>
</organism>
<sequence>MNSPFHNIGIVTRPNTPDIQDTAHTLITFLKQHGFTVYLDEVGVRECCIYTQDTDGCHIVNKTELGQYCDLVAVLGGDGTFLSAAREITPRAVPIIGINQGHLGFLTQIPREYMTDKLLPVLEGKYLAEERILIEAALIREGKTAERALALNDAVLSRGGAGQMIEFEVFVNQEFVYTQRSDGLIVSTPTGSTAYSLAAGGPIMQAGLHAFTLVPICPQSMTNRPIAIPDTSEIEILVTQGGDARVHFDGQSFIDVQNLDRIIIRRYHNPLRILHPTDYQYFKTLRQKLHWGEQLV</sequence>